<sequence>MQVILLDKIGNLGGLGDQVNVKAGYARNFLIPQGKVVMATKANVEMFETRRAELEANVAKQLAAAEARAESVNALEVTIASKSGDEGKLFGSIGNRDIADAATAAGVAIAKSEVRLPEGALRTTGSFEVSIQLHSEVFATLKLEVVAAE</sequence>
<proteinExistence type="inferred from homology"/>
<feature type="chain" id="PRO_1000126858" description="Large ribosomal subunit protein bL9">
    <location>
        <begin position="1"/>
        <end position="149"/>
    </location>
</feature>
<name>RL9_ALISL</name>
<organism>
    <name type="scientific">Aliivibrio salmonicida (strain LFI1238)</name>
    <name type="common">Vibrio salmonicida (strain LFI1238)</name>
    <dbReference type="NCBI Taxonomy" id="316275"/>
    <lineage>
        <taxon>Bacteria</taxon>
        <taxon>Pseudomonadati</taxon>
        <taxon>Pseudomonadota</taxon>
        <taxon>Gammaproteobacteria</taxon>
        <taxon>Vibrionales</taxon>
        <taxon>Vibrionaceae</taxon>
        <taxon>Aliivibrio</taxon>
    </lineage>
</organism>
<dbReference type="EMBL" id="FM178379">
    <property type="protein sequence ID" value="CAQ80447.1"/>
    <property type="molecule type" value="Genomic_DNA"/>
</dbReference>
<dbReference type="RefSeq" id="WP_012551200.1">
    <property type="nucleotide sequence ID" value="NC_011312.1"/>
</dbReference>
<dbReference type="SMR" id="B6EMP3"/>
<dbReference type="KEGG" id="vsa:VSAL_I2763"/>
<dbReference type="eggNOG" id="COG0359">
    <property type="taxonomic scope" value="Bacteria"/>
</dbReference>
<dbReference type="HOGENOM" id="CLU_078938_4_1_6"/>
<dbReference type="Proteomes" id="UP000001730">
    <property type="component" value="Chromosome 1"/>
</dbReference>
<dbReference type="GO" id="GO:1990904">
    <property type="term" value="C:ribonucleoprotein complex"/>
    <property type="evidence" value="ECO:0007669"/>
    <property type="project" value="UniProtKB-KW"/>
</dbReference>
<dbReference type="GO" id="GO:0005840">
    <property type="term" value="C:ribosome"/>
    <property type="evidence" value="ECO:0007669"/>
    <property type="project" value="UniProtKB-KW"/>
</dbReference>
<dbReference type="GO" id="GO:0019843">
    <property type="term" value="F:rRNA binding"/>
    <property type="evidence" value="ECO:0007669"/>
    <property type="project" value="UniProtKB-UniRule"/>
</dbReference>
<dbReference type="GO" id="GO:0003735">
    <property type="term" value="F:structural constituent of ribosome"/>
    <property type="evidence" value="ECO:0007669"/>
    <property type="project" value="InterPro"/>
</dbReference>
<dbReference type="GO" id="GO:0006412">
    <property type="term" value="P:translation"/>
    <property type="evidence" value="ECO:0007669"/>
    <property type="project" value="UniProtKB-UniRule"/>
</dbReference>
<dbReference type="FunFam" id="3.10.430.100:FF:000001">
    <property type="entry name" value="50S ribosomal protein L9"/>
    <property type="match status" value="1"/>
</dbReference>
<dbReference type="FunFam" id="3.40.5.10:FF:000001">
    <property type="entry name" value="50S ribosomal protein L9"/>
    <property type="match status" value="1"/>
</dbReference>
<dbReference type="Gene3D" id="3.10.430.100">
    <property type="entry name" value="Ribosomal protein L9, C-terminal domain"/>
    <property type="match status" value="1"/>
</dbReference>
<dbReference type="Gene3D" id="3.40.5.10">
    <property type="entry name" value="Ribosomal protein L9, N-terminal domain"/>
    <property type="match status" value="1"/>
</dbReference>
<dbReference type="HAMAP" id="MF_00503">
    <property type="entry name" value="Ribosomal_bL9"/>
    <property type="match status" value="1"/>
</dbReference>
<dbReference type="InterPro" id="IPR000244">
    <property type="entry name" value="Ribosomal_bL9"/>
</dbReference>
<dbReference type="InterPro" id="IPR009027">
    <property type="entry name" value="Ribosomal_bL9/RNase_H1_N"/>
</dbReference>
<dbReference type="InterPro" id="IPR020594">
    <property type="entry name" value="Ribosomal_bL9_bac/chp"/>
</dbReference>
<dbReference type="InterPro" id="IPR020069">
    <property type="entry name" value="Ribosomal_bL9_C"/>
</dbReference>
<dbReference type="InterPro" id="IPR036791">
    <property type="entry name" value="Ribosomal_bL9_C_sf"/>
</dbReference>
<dbReference type="InterPro" id="IPR020070">
    <property type="entry name" value="Ribosomal_bL9_N"/>
</dbReference>
<dbReference type="InterPro" id="IPR036935">
    <property type="entry name" value="Ribosomal_bL9_N_sf"/>
</dbReference>
<dbReference type="NCBIfam" id="TIGR00158">
    <property type="entry name" value="L9"/>
    <property type="match status" value="1"/>
</dbReference>
<dbReference type="PANTHER" id="PTHR21368">
    <property type="entry name" value="50S RIBOSOMAL PROTEIN L9"/>
    <property type="match status" value="1"/>
</dbReference>
<dbReference type="Pfam" id="PF03948">
    <property type="entry name" value="Ribosomal_L9_C"/>
    <property type="match status" value="1"/>
</dbReference>
<dbReference type="Pfam" id="PF01281">
    <property type="entry name" value="Ribosomal_L9_N"/>
    <property type="match status" value="1"/>
</dbReference>
<dbReference type="SUPFAM" id="SSF55658">
    <property type="entry name" value="L9 N-domain-like"/>
    <property type="match status" value="1"/>
</dbReference>
<dbReference type="SUPFAM" id="SSF55653">
    <property type="entry name" value="Ribosomal protein L9 C-domain"/>
    <property type="match status" value="1"/>
</dbReference>
<evidence type="ECO:0000255" key="1">
    <source>
        <dbReference type="HAMAP-Rule" id="MF_00503"/>
    </source>
</evidence>
<evidence type="ECO:0000305" key="2"/>
<comment type="function">
    <text evidence="1">Binds to the 23S rRNA.</text>
</comment>
<comment type="similarity">
    <text evidence="1">Belongs to the bacterial ribosomal protein bL9 family.</text>
</comment>
<reference key="1">
    <citation type="journal article" date="2008" name="BMC Genomics">
        <title>The genome sequence of the fish pathogen Aliivibrio salmonicida strain LFI1238 shows extensive evidence of gene decay.</title>
        <authorList>
            <person name="Hjerde E."/>
            <person name="Lorentzen M.S."/>
            <person name="Holden M.T."/>
            <person name="Seeger K."/>
            <person name="Paulsen S."/>
            <person name="Bason N."/>
            <person name="Churcher C."/>
            <person name="Harris D."/>
            <person name="Norbertczak H."/>
            <person name="Quail M.A."/>
            <person name="Sanders S."/>
            <person name="Thurston S."/>
            <person name="Parkhill J."/>
            <person name="Willassen N.P."/>
            <person name="Thomson N.R."/>
        </authorList>
    </citation>
    <scope>NUCLEOTIDE SEQUENCE [LARGE SCALE GENOMIC DNA]</scope>
    <source>
        <strain>LFI1238</strain>
    </source>
</reference>
<protein>
    <recommendedName>
        <fullName evidence="1">Large ribosomal subunit protein bL9</fullName>
    </recommendedName>
    <alternativeName>
        <fullName evidence="2">50S ribosomal protein L9</fullName>
    </alternativeName>
</protein>
<gene>
    <name evidence="1" type="primary">rplI</name>
    <name type="ordered locus">VSAL_I2763</name>
</gene>
<keyword id="KW-0687">Ribonucleoprotein</keyword>
<keyword id="KW-0689">Ribosomal protein</keyword>
<keyword id="KW-0694">RNA-binding</keyword>
<keyword id="KW-0699">rRNA-binding</keyword>
<accession>B6EMP3</accession>